<sequence>MKSYQGLADKWIKGSGEEYLDINPADKDHVLAKIRLYTKDDVKEAINKAVAKFDEWSRTPAPKRGSILLKAGELMEQEAQEFALLMTLEEGKTLKDSMFEVTRSYNLLKFYGALAFKISGKTLPSADPNTRIFTVKEPLGVVALITPWNFPLSIPVWKLAPALAAGNTAVIKPATKTPLMVAKLVEVLSKAGLPEGVVNLVVGKGSEVGDTIVSDDNIAAVSFTGSTEVGKRIYKLVGNKNRMTRIQLELGGKNALYVDKSADLTLAAELAVRGGFGLTGQSCTATSRLIINKDVYTQFKQRLLERVKKWRVGPGTEDVDMGPVVDEGQFKKDLEYIEYGKNVGAKLIYGGNIIPGKGYFLEPTIFEGVTSDMRLFKEEIFGPVLSVTEAKDLDEAIRLVNAVDYGHTAGIVASDIKAINEFVSRVEAGVIKVNKPTVGLELQAPFGGFKNSGATTWKEMGEDALEFYLKEKTVYEGW</sequence>
<name>KGSDH_SACS2</name>
<reference key="1">
    <citation type="journal article" date="2001" name="Proc. Natl. Acad. Sci. U.S.A.">
        <title>The complete genome of the crenarchaeon Sulfolobus solfataricus P2.</title>
        <authorList>
            <person name="She Q."/>
            <person name="Singh R.K."/>
            <person name="Confalonieri F."/>
            <person name="Zivanovic Y."/>
            <person name="Allard G."/>
            <person name="Awayez M.J."/>
            <person name="Chan-Weiher C.C.-Y."/>
            <person name="Clausen I.G."/>
            <person name="Curtis B.A."/>
            <person name="De Moors A."/>
            <person name="Erauso G."/>
            <person name="Fletcher C."/>
            <person name="Gordon P.M.K."/>
            <person name="Heikamp-de Jong I."/>
            <person name="Jeffries A.C."/>
            <person name="Kozera C.J."/>
            <person name="Medina N."/>
            <person name="Peng X."/>
            <person name="Thi-Ngoc H.P."/>
            <person name="Redder P."/>
            <person name="Schenk M.E."/>
            <person name="Theriault C."/>
            <person name="Tolstrup N."/>
            <person name="Charlebois R.L."/>
            <person name="Doolittle W.F."/>
            <person name="Duguet M."/>
            <person name="Gaasterland T."/>
            <person name="Garrett R.A."/>
            <person name="Ragan M.A."/>
            <person name="Sensen C.W."/>
            <person name="Van der Oost J."/>
        </authorList>
    </citation>
    <scope>NUCLEOTIDE SEQUENCE [LARGE SCALE GENOMIC DNA]</scope>
    <source>
        <strain>ATCC 35092 / DSM 1617 / JCM 11322 / P2</strain>
    </source>
</reference>
<reference key="2">
    <citation type="journal article" date="2006" name="J. Biol. Chem.">
        <title>Identification of the missing links in prokaryotic pentose oxidation pathways: evidence for enzyme recruitment.</title>
        <authorList>
            <person name="Brouns S.J."/>
            <person name="Walther J."/>
            <person name="Snijders A.P."/>
            <person name="van de Werken H.J."/>
            <person name="Willemen H.L."/>
            <person name="Worm P."/>
            <person name="de Vos M.G."/>
            <person name="Andersson A."/>
            <person name="Lundgren M."/>
            <person name="Mazon H.F."/>
            <person name="van den Heuvel R.H."/>
            <person name="Nilsson P."/>
            <person name="Salmon L."/>
            <person name="de Vos W.M."/>
            <person name="Wright P.C."/>
            <person name="Bernander R."/>
            <person name="van der Oost J."/>
        </authorList>
    </citation>
    <scope>FUNCTION</scope>
    <scope>SUBUNIT</scope>
    <scope>CATALYTIC ACTIVITY</scope>
    <scope>BIOPHYSICOCHEMICAL PROPERTIES</scope>
    <scope>INDUCTION</scope>
    <source>
        <strain>ATCC 35092 / DSM 1617 / JCM 11322 / P2</strain>
    </source>
</reference>
<feature type="chain" id="PRO_0000428928" description="2,5-dioxopentanoate dehydrogenase">
    <location>
        <begin position="1"/>
        <end position="478"/>
    </location>
</feature>
<feature type="active site" description="Proton acceptor" evidence="2 3">
    <location>
        <position position="249"/>
    </location>
</feature>
<feature type="active site" description="Nucleophile" evidence="2 3">
    <location>
        <position position="283"/>
    </location>
</feature>
<feature type="binding site" evidence="1">
    <location>
        <begin position="148"/>
        <end position="149"/>
    </location>
    <ligand>
        <name>NADP(+)</name>
        <dbReference type="ChEBI" id="CHEBI:58349"/>
    </ligand>
</feature>
<feature type="binding site" evidence="1">
    <location>
        <begin position="172"/>
        <end position="175"/>
    </location>
    <ligand>
        <name>NADP(+)</name>
        <dbReference type="ChEBI" id="CHEBI:58349"/>
    </ligand>
</feature>
<feature type="binding site" evidence="1">
    <location>
        <begin position="225"/>
        <end position="226"/>
    </location>
    <ligand>
        <name>NADP(+)</name>
        <dbReference type="ChEBI" id="CHEBI:58349"/>
    </ligand>
</feature>
<feature type="binding site" evidence="1">
    <location>
        <position position="379"/>
    </location>
    <ligand>
        <name>NADP(+)</name>
        <dbReference type="ChEBI" id="CHEBI:58349"/>
    </ligand>
</feature>
<comment type="function">
    <text evidence="4">2,5-dioxopentanoate dehydrogenase involved in the degradation of pentoses such as D-arabinose or D-xylose, a major component of hemicelluloses such as xylan. Catalyzes the fifth reaction in the pentose utilization pathway through dehydratation of 2,5-dioxopentanoate into 2-oxoglutarate. Also shows dehydrogenase activity toward glycolaldehyde and DL-glyceraldehyde.</text>
</comment>
<comment type="catalytic activity">
    <reaction evidence="4">
        <text>2,5-dioxopentanoate + NADP(+) + H2O = 2-oxoglutarate + NADPH + 2 H(+)</text>
        <dbReference type="Rhea" id="RHEA:11296"/>
        <dbReference type="ChEBI" id="CHEBI:15377"/>
        <dbReference type="ChEBI" id="CHEBI:15378"/>
        <dbReference type="ChEBI" id="CHEBI:16810"/>
        <dbReference type="ChEBI" id="CHEBI:57783"/>
        <dbReference type="ChEBI" id="CHEBI:58136"/>
        <dbReference type="ChEBI" id="CHEBI:58349"/>
        <dbReference type="EC" id="1.2.1.26"/>
    </reaction>
</comment>
<comment type="biophysicochemical properties">
    <phDependence>
        <text evidence="4">Optimum pH is 7.8.</text>
    </phDependence>
</comment>
<comment type="subunit">
    <text evidence="4">Homotetramer.</text>
</comment>
<comment type="induction">
    <text evidence="4">Expression is highly induced during growth on D-arabinose. The promoter contains the conserved cis-regulatory element 5'-AACATGTT-3' ARA-box found in arabinose-induced genes.</text>
</comment>
<comment type="similarity">
    <text evidence="6">Belongs to the aldehyde dehydrogenase family.</text>
</comment>
<dbReference type="EC" id="1.2.1.26" evidence="4"/>
<dbReference type="EMBL" id="AE006641">
    <property type="protein sequence ID" value="AAK43220.1"/>
    <property type="molecule type" value="Genomic_DNA"/>
</dbReference>
<dbReference type="PIR" id="E90495">
    <property type="entry name" value="E90495"/>
</dbReference>
<dbReference type="RefSeq" id="WP_009990943.1">
    <property type="nucleotide sequence ID" value="NC_002754.1"/>
</dbReference>
<dbReference type="SMR" id="Q97UA1"/>
<dbReference type="FunCoup" id="Q97UA1">
    <property type="interactions" value="62"/>
</dbReference>
<dbReference type="STRING" id="273057.SSO3117"/>
<dbReference type="PaxDb" id="273057-SSO3117"/>
<dbReference type="EnsemblBacteria" id="AAK43220">
    <property type="protein sequence ID" value="AAK43220"/>
    <property type="gene ID" value="SSO3117"/>
</dbReference>
<dbReference type="GeneID" id="44128838"/>
<dbReference type="KEGG" id="sso:SSO3117"/>
<dbReference type="PATRIC" id="fig|273057.12.peg.3225"/>
<dbReference type="eggNOG" id="arCOG01252">
    <property type="taxonomic scope" value="Archaea"/>
</dbReference>
<dbReference type="HOGENOM" id="CLU_005391_0_1_2"/>
<dbReference type="InParanoid" id="Q97UA1"/>
<dbReference type="PhylomeDB" id="Q97UA1"/>
<dbReference type="BioCyc" id="MetaCyc:MONOMER-13207"/>
<dbReference type="BRENDA" id="1.2.1.22">
    <property type="organism ID" value="6163"/>
</dbReference>
<dbReference type="BRENDA" id="1.2.1.26">
    <property type="organism ID" value="6163"/>
</dbReference>
<dbReference type="Proteomes" id="UP000001974">
    <property type="component" value="Chromosome"/>
</dbReference>
<dbReference type="GO" id="GO:0047533">
    <property type="term" value="F:2,5-dioxovalerate dehydrogenase (NADP+) activity"/>
    <property type="evidence" value="ECO:0007669"/>
    <property type="project" value="UniProtKB-EC"/>
</dbReference>
<dbReference type="GO" id="GO:0019568">
    <property type="term" value="P:arabinose catabolic process"/>
    <property type="evidence" value="ECO:0007669"/>
    <property type="project" value="UniProtKB-KW"/>
</dbReference>
<dbReference type="CDD" id="cd07097">
    <property type="entry name" value="ALDH_KGSADH-YcbD"/>
    <property type="match status" value="1"/>
</dbReference>
<dbReference type="FunFam" id="3.40.309.10:FF:000005">
    <property type="entry name" value="1-pyrroline-5-carboxylate dehydrogenase 1"/>
    <property type="match status" value="1"/>
</dbReference>
<dbReference type="FunFam" id="3.40.605.10:FF:000007">
    <property type="entry name" value="NAD/NADP-dependent betaine aldehyde dehydrogenase"/>
    <property type="match status" value="1"/>
</dbReference>
<dbReference type="Gene3D" id="3.40.605.10">
    <property type="entry name" value="Aldehyde Dehydrogenase, Chain A, domain 1"/>
    <property type="match status" value="1"/>
</dbReference>
<dbReference type="Gene3D" id="3.40.309.10">
    <property type="entry name" value="Aldehyde Dehydrogenase, Chain A, domain 2"/>
    <property type="match status" value="1"/>
</dbReference>
<dbReference type="InterPro" id="IPR016161">
    <property type="entry name" value="Ald_DH/histidinol_DH"/>
</dbReference>
<dbReference type="InterPro" id="IPR016163">
    <property type="entry name" value="Ald_DH_C"/>
</dbReference>
<dbReference type="InterPro" id="IPR016160">
    <property type="entry name" value="Ald_DH_CS_CYS"/>
</dbReference>
<dbReference type="InterPro" id="IPR029510">
    <property type="entry name" value="Ald_DH_CS_GLU"/>
</dbReference>
<dbReference type="InterPro" id="IPR016162">
    <property type="entry name" value="Ald_DH_N"/>
</dbReference>
<dbReference type="InterPro" id="IPR015590">
    <property type="entry name" value="Aldehyde_DH_dom"/>
</dbReference>
<dbReference type="PANTHER" id="PTHR11699">
    <property type="entry name" value="ALDEHYDE DEHYDROGENASE-RELATED"/>
    <property type="match status" value="1"/>
</dbReference>
<dbReference type="Pfam" id="PF00171">
    <property type="entry name" value="Aldedh"/>
    <property type="match status" value="1"/>
</dbReference>
<dbReference type="SUPFAM" id="SSF53720">
    <property type="entry name" value="ALDH-like"/>
    <property type="match status" value="1"/>
</dbReference>
<dbReference type="PROSITE" id="PS00070">
    <property type="entry name" value="ALDEHYDE_DEHYDR_CYS"/>
    <property type="match status" value="1"/>
</dbReference>
<dbReference type="PROSITE" id="PS00687">
    <property type="entry name" value="ALDEHYDE_DEHYDR_GLU"/>
    <property type="match status" value="1"/>
</dbReference>
<organism>
    <name type="scientific">Saccharolobus solfataricus (strain ATCC 35092 / DSM 1617 / JCM 11322 / P2)</name>
    <name type="common">Sulfolobus solfataricus</name>
    <dbReference type="NCBI Taxonomy" id="273057"/>
    <lineage>
        <taxon>Archaea</taxon>
        <taxon>Thermoproteota</taxon>
        <taxon>Thermoprotei</taxon>
        <taxon>Sulfolobales</taxon>
        <taxon>Sulfolobaceae</taxon>
        <taxon>Saccharolobus</taxon>
    </lineage>
</organism>
<evidence type="ECO:0000250" key="1"/>
<evidence type="ECO:0000255" key="2">
    <source>
        <dbReference type="PROSITE-ProRule" id="PRU10007"/>
    </source>
</evidence>
<evidence type="ECO:0000255" key="3">
    <source>
        <dbReference type="PROSITE-ProRule" id="PRU10008"/>
    </source>
</evidence>
<evidence type="ECO:0000269" key="4">
    <source>
    </source>
</evidence>
<evidence type="ECO:0000303" key="5">
    <source>
    </source>
</evidence>
<evidence type="ECO:0000305" key="6"/>
<evidence type="ECO:0000312" key="7">
    <source>
        <dbReference type="EMBL" id="AAK43220.1"/>
    </source>
</evidence>
<keyword id="KW-0054">Arabinose catabolism</keyword>
<keyword id="KW-0119">Carbohydrate metabolism</keyword>
<keyword id="KW-0521">NADP</keyword>
<keyword id="KW-0560">Oxidoreductase</keyword>
<keyword id="KW-1185">Reference proteome</keyword>
<gene>
    <name evidence="5" type="primary">dopDH</name>
    <name evidence="7" type="synonym">aldhT</name>
    <name type="ordered locus">SSO3117</name>
</gene>
<protein>
    <recommendedName>
        <fullName>2,5-dioxopentanoate dehydrogenase</fullName>
        <shortName evidence="5">DopDH</shortName>
        <ecNumber evidence="4">1.2.1.26</ecNumber>
    </recommendedName>
    <alternativeName>
        <fullName>Aldehyde dehydrogenase T</fullName>
    </alternativeName>
    <alternativeName>
        <fullName>Alpha-ketoglutaric semialdehyde dehydrogenase AldhT</fullName>
    </alternativeName>
</protein>
<proteinExistence type="evidence at protein level"/>
<accession>Q97UA1</accession>